<proteinExistence type="inferred from homology"/>
<comment type="function">
    <text evidence="2">Catalyzes a mechanistically unusual reaction, the ATP-dependent insertion of CO2 between the N7 and N8 nitrogen atoms of 7,8-diaminopelargonic acid (DAPA, also called 7,8-diammoniononanoate) to form a ureido ring.</text>
</comment>
<comment type="catalytic activity">
    <reaction evidence="2">
        <text>(7R,8S)-7,8-diammoniononanoate + CO2 + ATP = (4R,5S)-dethiobiotin + ADP + phosphate + 3 H(+)</text>
        <dbReference type="Rhea" id="RHEA:15805"/>
        <dbReference type="ChEBI" id="CHEBI:15378"/>
        <dbReference type="ChEBI" id="CHEBI:16526"/>
        <dbReference type="ChEBI" id="CHEBI:30616"/>
        <dbReference type="ChEBI" id="CHEBI:43474"/>
        <dbReference type="ChEBI" id="CHEBI:149469"/>
        <dbReference type="ChEBI" id="CHEBI:149473"/>
        <dbReference type="ChEBI" id="CHEBI:456216"/>
        <dbReference type="EC" id="6.3.3.3"/>
    </reaction>
</comment>
<comment type="cofactor">
    <cofactor evidence="2">
        <name>Mg(2+)</name>
        <dbReference type="ChEBI" id="CHEBI:18420"/>
    </cofactor>
</comment>
<comment type="pathway">
    <text evidence="2">Cofactor biosynthesis; biotin biosynthesis; biotin from 7,8-diaminononanoate: step 1/2.</text>
</comment>
<comment type="subunit">
    <text evidence="2">Homodimer.</text>
</comment>
<comment type="subcellular location">
    <subcellularLocation>
        <location evidence="2">Cytoplasm</location>
    </subcellularLocation>
</comment>
<comment type="similarity">
    <text evidence="2">Belongs to the dethiobiotin synthetase family.</text>
</comment>
<gene>
    <name evidence="2" type="primary">bioD</name>
</gene>
<accession>P36572</accession>
<name>BIOD_SERMA</name>
<keyword id="KW-0067">ATP-binding</keyword>
<keyword id="KW-0093">Biotin biosynthesis</keyword>
<keyword id="KW-0963">Cytoplasm</keyword>
<keyword id="KW-0436">Ligase</keyword>
<keyword id="KW-0460">Magnesium</keyword>
<keyword id="KW-0479">Metal-binding</keyword>
<keyword id="KW-0547">Nucleotide-binding</keyword>
<protein>
    <recommendedName>
        <fullName evidence="2">ATP-dependent dethiobiotin synthetase BioD</fullName>
        <ecNumber evidence="2">6.3.3.3</ecNumber>
    </recommendedName>
    <alternativeName>
        <fullName evidence="2">DTB synthetase</fullName>
        <shortName evidence="2">DTBS</shortName>
    </alternativeName>
    <alternativeName>
        <fullName evidence="2">Dethiobiotin synthase</fullName>
    </alternativeName>
</protein>
<reference key="1">
    <citation type="journal article" date="1993" name="Appl. Environ. Microbiol.">
        <title>Molecular breeding of a biotin-hyperproducing Serratia marcescens strain.</title>
        <authorList>
            <person name="Sakurai N."/>
            <person name="Imai Y."/>
            <person name="Masuda M."/>
            <person name="Komatsubara S."/>
            <person name="Tosa T."/>
        </authorList>
    </citation>
    <scope>NUCLEOTIDE SEQUENCE [GENOMIC DNA]</scope>
    <source>
        <strain>Sr41</strain>
    </source>
</reference>
<feature type="initiator methionine" description="Removed" evidence="1">
    <location>
        <position position="1"/>
    </location>
</feature>
<feature type="chain" id="PRO_0000187988" description="ATP-dependent dethiobiotin synthetase BioD">
    <location>
        <begin position="2"/>
        <end position="227"/>
    </location>
</feature>
<feature type="active site" evidence="2">
    <location>
        <position position="38"/>
    </location>
</feature>
<feature type="binding site" evidence="2">
    <location>
        <begin position="13"/>
        <end position="18"/>
    </location>
    <ligand>
        <name>ATP</name>
        <dbReference type="ChEBI" id="CHEBI:30616"/>
    </ligand>
</feature>
<feature type="binding site" evidence="2">
    <location>
        <position position="17"/>
    </location>
    <ligand>
        <name>Mg(2+)</name>
        <dbReference type="ChEBI" id="CHEBI:18420"/>
    </ligand>
</feature>
<feature type="binding site" evidence="2">
    <location>
        <position position="42"/>
    </location>
    <ligand>
        <name>substrate</name>
    </ligand>
</feature>
<feature type="binding site" evidence="2">
    <location>
        <position position="55"/>
    </location>
    <ligand>
        <name>ATP</name>
        <dbReference type="ChEBI" id="CHEBI:30616"/>
    </ligand>
</feature>
<feature type="binding site" evidence="2">
    <location>
        <position position="55"/>
    </location>
    <ligand>
        <name>Mg(2+)</name>
        <dbReference type="ChEBI" id="CHEBI:18420"/>
    </ligand>
</feature>
<feature type="binding site" evidence="2">
    <location>
        <begin position="116"/>
        <end position="119"/>
    </location>
    <ligand>
        <name>ATP</name>
        <dbReference type="ChEBI" id="CHEBI:30616"/>
    </ligand>
</feature>
<feature type="binding site" evidence="2">
    <location>
        <position position="116"/>
    </location>
    <ligand>
        <name>Mg(2+)</name>
        <dbReference type="ChEBI" id="CHEBI:18420"/>
    </ligand>
</feature>
<feature type="binding site" evidence="2">
    <location>
        <begin position="176"/>
        <end position="177"/>
    </location>
    <ligand>
        <name>ATP</name>
        <dbReference type="ChEBI" id="CHEBI:30616"/>
    </ligand>
</feature>
<sequence length="227" mass="24590">MSKRWFVTGTDTEVGKSVASSALLQAANRAGYPSAGYKPVASGSEMTAEGLRNGDALALQANSGVALDYDEVNPYVFAEPTSPHIVSADEGRPIDAARLSDGLRRLEQRADWVLVEGAGGWFTPLSAEYTFADWVRQEQLPVILVVGIKLGCINHAVLTAQAVQQAGLTLAGWIANDVGGAPGRRHQEYLATLRRMLPRRCWAKSRTCRRPERAPLGQYLDISLLAQ</sequence>
<organism>
    <name type="scientific">Serratia marcescens</name>
    <dbReference type="NCBI Taxonomy" id="615"/>
    <lineage>
        <taxon>Bacteria</taxon>
        <taxon>Pseudomonadati</taxon>
        <taxon>Pseudomonadota</taxon>
        <taxon>Gammaproteobacteria</taxon>
        <taxon>Enterobacterales</taxon>
        <taxon>Yersiniaceae</taxon>
        <taxon>Serratia</taxon>
    </lineage>
</organism>
<dbReference type="EC" id="6.3.3.3" evidence="2"/>
<dbReference type="EMBL" id="D17468">
    <property type="protein sequence ID" value="BAA04288.1"/>
    <property type="molecule type" value="Genomic_DNA"/>
</dbReference>
<dbReference type="SMR" id="P36572"/>
<dbReference type="STRING" id="273526.SMDB11_0563"/>
<dbReference type="UniPathway" id="UPA00078">
    <property type="reaction ID" value="UER00161"/>
</dbReference>
<dbReference type="GO" id="GO:0005829">
    <property type="term" value="C:cytosol"/>
    <property type="evidence" value="ECO:0007669"/>
    <property type="project" value="TreeGrafter"/>
</dbReference>
<dbReference type="GO" id="GO:0005524">
    <property type="term" value="F:ATP binding"/>
    <property type="evidence" value="ECO:0007669"/>
    <property type="project" value="UniProtKB-UniRule"/>
</dbReference>
<dbReference type="GO" id="GO:0004141">
    <property type="term" value="F:dethiobiotin synthase activity"/>
    <property type="evidence" value="ECO:0007669"/>
    <property type="project" value="UniProtKB-UniRule"/>
</dbReference>
<dbReference type="GO" id="GO:0000287">
    <property type="term" value="F:magnesium ion binding"/>
    <property type="evidence" value="ECO:0007669"/>
    <property type="project" value="UniProtKB-UniRule"/>
</dbReference>
<dbReference type="GO" id="GO:0009102">
    <property type="term" value="P:biotin biosynthetic process"/>
    <property type="evidence" value="ECO:0007669"/>
    <property type="project" value="UniProtKB-UniRule"/>
</dbReference>
<dbReference type="CDD" id="cd03109">
    <property type="entry name" value="DTBS"/>
    <property type="match status" value="1"/>
</dbReference>
<dbReference type="FunFam" id="3.40.50.300:FF:000292">
    <property type="entry name" value="ATP-dependent dethiobiotin synthetase BioD"/>
    <property type="match status" value="1"/>
</dbReference>
<dbReference type="Gene3D" id="3.40.50.300">
    <property type="entry name" value="P-loop containing nucleotide triphosphate hydrolases"/>
    <property type="match status" value="1"/>
</dbReference>
<dbReference type="HAMAP" id="MF_00336">
    <property type="entry name" value="BioD"/>
    <property type="match status" value="1"/>
</dbReference>
<dbReference type="InterPro" id="IPR004472">
    <property type="entry name" value="DTB_synth_BioD"/>
</dbReference>
<dbReference type="InterPro" id="IPR027417">
    <property type="entry name" value="P-loop_NTPase"/>
</dbReference>
<dbReference type="NCBIfam" id="TIGR00347">
    <property type="entry name" value="bioD"/>
    <property type="match status" value="1"/>
</dbReference>
<dbReference type="PANTHER" id="PTHR43210">
    <property type="entry name" value="DETHIOBIOTIN SYNTHETASE"/>
    <property type="match status" value="1"/>
</dbReference>
<dbReference type="PANTHER" id="PTHR43210:SF5">
    <property type="entry name" value="DETHIOBIOTIN SYNTHETASE"/>
    <property type="match status" value="1"/>
</dbReference>
<dbReference type="Pfam" id="PF13500">
    <property type="entry name" value="AAA_26"/>
    <property type="match status" value="1"/>
</dbReference>
<dbReference type="PIRSF" id="PIRSF006755">
    <property type="entry name" value="DTB_synth"/>
    <property type="match status" value="1"/>
</dbReference>
<dbReference type="SUPFAM" id="SSF52540">
    <property type="entry name" value="P-loop containing nucleoside triphosphate hydrolases"/>
    <property type="match status" value="1"/>
</dbReference>
<evidence type="ECO:0000250" key="1"/>
<evidence type="ECO:0000255" key="2">
    <source>
        <dbReference type="HAMAP-Rule" id="MF_00336"/>
    </source>
</evidence>